<name>FOLD_BORBU</name>
<reference key="1">
    <citation type="journal article" date="1997" name="Nature">
        <title>Genomic sequence of a Lyme disease spirochaete, Borrelia burgdorferi.</title>
        <authorList>
            <person name="Fraser C.M."/>
            <person name="Casjens S."/>
            <person name="Huang W.M."/>
            <person name="Sutton G.G."/>
            <person name="Clayton R.A."/>
            <person name="Lathigra R."/>
            <person name="White O."/>
            <person name="Ketchum K.A."/>
            <person name="Dodson R.J."/>
            <person name="Hickey E.K."/>
            <person name="Gwinn M.L."/>
            <person name="Dougherty B.A."/>
            <person name="Tomb J.-F."/>
            <person name="Fleischmann R.D."/>
            <person name="Richardson D.L."/>
            <person name="Peterson J.D."/>
            <person name="Kerlavage A.R."/>
            <person name="Quackenbush J."/>
            <person name="Salzberg S.L."/>
            <person name="Hanson M."/>
            <person name="van Vugt R."/>
            <person name="Palmer N."/>
            <person name="Adams M.D."/>
            <person name="Gocayne J.D."/>
            <person name="Weidman J.F."/>
            <person name="Utterback T.R."/>
            <person name="Watthey L."/>
            <person name="McDonald L.A."/>
            <person name="Artiach P."/>
            <person name="Bowman C."/>
            <person name="Garland S.A."/>
            <person name="Fujii C."/>
            <person name="Cotton M.D."/>
            <person name="Horst K."/>
            <person name="Roberts K.M."/>
            <person name="Hatch B."/>
            <person name="Smith H.O."/>
            <person name="Venter J.C."/>
        </authorList>
    </citation>
    <scope>NUCLEOTIDE SEQUENCE [LARGE SCALE GENOMIC DNA]</scope>
    <source>
        <strain>ATCC 35210 / DSM 4680 / CIP 102532 / B31</strain>
    </source>
</reference>
<feature type="chain" id="PRO_0000268290" description="Bifunctional protein FolD">
    <location>
        <begin position="1"/>
        <end position="308"/>
    </location>
</feature>
<feature type="binding site" evidence="1">
    <location>
        <begin position="171"/>
        <end position="173"/>
    </location>
    <ligand>
        <name>NADP(+)</name>
        <dbReference type="ChEBI" id="CHEBI:58349"/>
    </ligand>
</feature>
<feature type="binding site" evidence="1">
    <location>
        <position position="198"/>
    </location>
    <ligand>
        <name>NADP(+)</name>
        <dbReference type="ChEBI" id="CHEBI:58349"/>
    </ligand>
</feature>
<feature type="binding site" evidence="1">
    <location>
        <position position="239"/>
    </location>
    <ligand>
        <name>NADP(+)</name>
        <dbReference type="ChEBI" id="CHEBI:58349"/>
    </ligand>
</feature>
<dbReference type="EC" id="1.5.1.5" evidence="1"/>
<dbReference type="EC" id="3.5.4.9" evidence="1"/>
<dbReference type="EMBL" id="AE000783">
    <property type="protein sequence ID" value="AAC66407.1"/>
    <property type="molecule type" value="Genomic_DNA"/>
</dbReference>
<dbReference type="PIR" id="B70103">
    <property type="entry name" value="B70103"/>
</dbReference>
<dbReference type="RefSeq" id="NP_212160.1">
    <property type="nucleotide sequence ID" value="NC_001318.1"/>
</dbReference>
<dbReference type="SMR" id="O51057"/>
<dbReference type="STRING" id="224326.BB_0026"/>
<dbReference type="PaxDb" id="224326-BB_0026"/>
<dbReference type="EnsemblBacteria" id="AAC66407">
    <property type="protein sequence ID" value="AAC66407"/>
    <property type="gene ID" value="BB_0026"/>
</dbReference>
<dbReference type="KEGG" id="bbu:BB_0026"/>
<dbReference type="PATRIC" id="fig|224326.49.peg.425"/>
<dbReference type="HOGENOM" id="CLU_034045_2_0_12"/>
<dbReference type="OrthoDB" id="9803580at2"/>
<dbReference type="UniPathway" id="UPA00193"/>
<dbReference type="Proteomes" id="UP000001807">
    <property type="component" value="Chromosome"/>
</dbReference>
<dbReference type="GO" id="GO:0005829">
    <property type="term" value="C:cytosol"/>
    <property type="evidence" value="ECO:0007669"/>
    <property type="project" value="TreeGrafter"/>
</dbReference>
<dbReference type="GO" id="GO:0004477">
    <property type="term" value="F:methenyltetrahydrofolate cyclohydrolase activity"/>
    <property type="evidence" value="ECO:0007669"/>
    <property type="project" value="UniProtKB-UniRule"/>
</dbReference>
<dbReference type="GO" id="GO:0004488">
    <property type="term" value="F:methylenetetrahydrofolate dehydrogenase (NADP+) activity"/>
    <property type="evidence" value="ECO:0007669"/>
    <property type="project" value="UniProtKB-UniRule"/>
</dbReference>
<dbReference type="GO" id="GO:0000105">
    <property type="term" value="P:L-histidine biosynthetic process"/>
    <property type="evidence" value="ECO:0007669"/>
    <property type="project" value="UniProtKB-KW"/>
</dbReference>
<dbReference type="GO" id="GO:0009086">
    <property type="term" value="P:methionine biosynthetic process"/>
    <property type="evidence" value="ECO:0007669"/>
    <property type="project" value="UniProtKB-KW"/>
</dbReference>
<dbReference type="GO" id="GO:0006164">
    <property type="term" value="P:purine nucleotide biosynthetic process"/>
    <property type="evidence" value="ECO:0007669"/>
    <property type="project" value="UniProtKB-KW"/>
</dbReference>
<dbReference type="GO" id="GO:0035999">
    <property type="term" value="P:tetrahydrofolate interconversion"/>
    <property type="evidence" value="ECO:0007669"/>
    <property type="project" value="UniProtKB-UniRule"/>
</dbReference>
<dbReference type="CDD" id="cd01080">
    <property type="entry name" value="NAD_bind_m-THF_DH_Cyclohyd"/>
    <property type="match status" value="1"/>
</dbReference>
<dbReference type="Gene3D" id="3.40.50.10860">
    <property type="entry name" value="Leucine Dehydrogenase, chain A, domain 1"/>
    <property type="match status" value="1"/>
</dbReference>
<dbReference type="Gene3D" id="3.40.50.720">
    <property type="entry name" value="NAD(P)-binding Rossmann-like Domain"/>
    <property type="match status" value="1"/>
</dbReference>
<dbReference type="HAMAP" id="MF_01576">
    <property type="entry name" value="THF_DHG_CYH"/>
    <property type="match status" value="1"/>
</dbReference>
<dbReference type="InterPro" id="IPR046346">
    <property type="entry name" value="Aminoacid_DH-like_N_sf"/>
</dbReference>
<dbReference type="InterPro" id="IPR036291">
    <property type="entry name" value="NAD(P)-bd_dom_sf"/>
</dbReference>
<dbReference type="InterPro" id="IPR000672">
    <property type="entry name" value="THF_DH/CycHdrlase"/>
</dbReference>
<dbReference type="InterPro" id="IPR020630">
    <property type="entry name" value="THF_DH/CycHdrlase_cat_dom"/>
</dbReference>
<dbReference type="InterPro" id="IPR020631">
    <property type="entry name" value="THF_DH/CycHdrlase_NAD-bd_dom"/>
</dbReference>
<dbReference type="PANTHER" id="PTHR48099:SF5">
    <property type="entry name" value="C-1-TETRAHYDROFOLATE SYNTHASE, CYTOPLASMIC"/>
    <property type="match status" value="1"/>
</dbReference>
<dbReference type="PANTHER" id="PTHR48099">
    <property type="entry name" value="C-1-TETRAHYDROFOLATE SYNTHASE, CYTOPLASMIC-RELATED"/>
    <property type="match status" value="1"/>
</dbReference>
<dbReference type="Pfam" id="PF00763">
    <property type="entry name" value="THF_DHG_CYH"/>
    <property type="match status" value="1"/>
</dbReference>
<dbReference type="Pfam" id="PF02882">
    <property type="entry name" value="THF_DHG_CYH_C"/>
    <property type="match status" value="1"/>
</dbReference>
<dbReference type="PRINTS" id="PR00085">
    <property type="entry name" value="THFDHDRGNASE"/>
</dbReference>
<dbReference type="SUPFAM" id="SSF53223">
    <property type="entry name" value="Aminoacid dehydrogenase-like, N-terminal domain"/>
    <property type="match status" value="1"/>
</dbReference>
<dbReference type="SUPFAM" id="SSF51735">
    <property type="entry name" value="NAD(P)-binding Rossmann-fold domains"/>
    <property type="match status" value="1"/>
</dbReference>
<comment type="function">
    <text evidence="1">Catalyzes the oxidation of 5,10-methylenetetrahydrofolate to 5,10-methenyltetrahydrofolate and then the hydrolysis of 5,10-methenyltetrahydrofolate to 10-formyltetrahydrofolate.</text>
</comment>
<comment type="catalytic activity">
    <reaction evidence="1">
        <text>(6R)-5,10-methylene-5,6,7,8-tetrahydrofolate + NADP(+) = (6R)-5,10-methenyltetrahydrofolate + NADPH</text>
        <dbReference type="Rhea" id="RHEA:22812"/>
        <dbReference type="ChEBI" id="CHEBI:15636"/>
        <dbReference type="ChEBI" id="CHEBI:57455"/>
        <dbReference type="ChEBI" id="CHEBI:57783"/>
        <dbReference type="ChEBI" id="CHEBI:58349"/>
        <dbReference type="EC" id="1.5.1.5"/>
    </reaction>
</comment>
<comment type="catalytic activity">
    <reaction evidence="1">
        <text>(6R)-5,10-methenyltetrahydrofolate + H2O = (6R)-10-formyltetrahydrofolate + H(+)</text>
        <dbReference type="Rhea" id="RHEA:23700"/>
        <dbReference type="ChEBI" id="CHEBI:15377"/>
        <dbReference type="ChEBI" id="CHEBI:15378"/>
        <dbReference type="ChEBI" id="CHEBI:57455"/>
        <dbReference type="ChEBI" id="CHEBI:195366"/>
        <dbReference type="EC" id="3.5.4.9"/>
    </reaction>
</comment>
<comment type="pathway">
    <text evidence="1">One-carbon metabolism; tetrahydrofolate interconversion.</text>
</comment>
<comment type="subunit">
    <text evidence="1">Homodimer.</text>
</comment>
<comment type="similarity">
    <text evidence="1">Belongs to the tetrahydrofolate dehydrogenase/cyclohydrolase family.</text>
</comment>
<sequence length="308" mass="34032">MGFKGYILSIVFNGKDFANKYYLMLKEFLKQHNLRDKIALKVVLANDEPASNLYVSIKSRVAKEIGLNVEVIKFSANSVQSDILEVIDRENKNLSTDGIIVQLPLLKGMDLNSILNSIVYSKDVDGLSFVNLGKMILGDKKGFIPCTALAVLKILRDEGIKTLGKTVVVVGRSPLVGRPISILLSSKPYDATVIVCHSKSIYLDVYLRQADIVISAVGKPRLIDKSMLCGKPYVIDIGISEIETDNGKILSGDTDFDNIKECVKFITPVKGGIGPVTVLMLMFNTIKAHLINNRMFDVLNRLEKLLEV</sequence>
<accession>O51057</accession>
<keyword id="KW-0028">Amino-acid biosynthesis</keyword>
<keyword id="KW-0368">Histidine biosynthesis</keyword>
<keyword id="KW-0378">Hydrolase</keyword>
<keyword id="KW-0486">Methionine biosynthesis</keyword>
<keyword id="KW-0511">Multifunctional enzyme</keyword>
<keyword id="KW-0521">NADP</keyword>
<keyword id="KW-0554">One-carbon metabolism</keyword>
<keyword id="KW-0560">Oxidoreductase</keyword>
<keyword id="KW-0658">Purine biosynthesis</keyword>
<keyword id="KW-1185">Reference proteome</keyword>
<organism>
    <name type="scientific">Borreliella burgdorferi (strain ATCC 35210 / DSM 4680 / CIP 102532 / B31)</name>
    <name type="common">Borrelia burgdorferi</name>
    <dbReference type="NCBI Taxonomy" id="224326"/>
    <lineage>
        <taxon>Bacteria</taxon>
        <taxon>Pseudomonadati</taxon>
        <taxon>Spirochaetota</taxon>
        <taxon>Spirochaetia</taxon>
        <taxon>Spirochaetales</taxon>
        <taxon>Borreliaceae</taxon>
        <taxon>Borreliella</taxon>
    </lineage>
</organism>
<proteinExistence type="inferred from homology"/>
<gene>
    <name evidence="1" type="primary">folD</name>
    <name type="ordered locus">BB_0026</name>
</gene>
<evidence type="ECO:0000255" key="1">
    <source>
        <dbReference type="HAMAP-Rule" id="MF_01576"/>
    </source>
</evidence>
<protein>
    <recommendedName>
        <fullName evidence="1">Bifunctional protein FolD</fullName>
    </recommendedName>
    <domain>
        <recommendedName>
            <fullName evidence="1">Methylenetetrahydrofolate dehydrogenase</fullName>
            <ecNumber evidence="1">1.5.1.5</ecNumber>
        </recommendedName>
    </domain>
    <domain>
        <recommendedName>
            <fullName evidence="1">Methenyltetrahydrofolate cyclohydrolase</fullName>
            <ecNumber evidence="1">3.5.4.9</ecNumber>
        </recommendedName>
    </domain>
</protein>